<sequence length="111" mass="13027">MISTVALFWALCVVCIVNMARYFSSLRALLVVLRNCDPLLYQYVDGGGFFTSHGQPNKQVRLVWYIYAQRYRDHHDDEFIRRCERVRRQFILTSALCGLVVVSLIALMIWH</sequence>
<accession>P0A8S8</accession>
<accession>P37632</accession>
<name>USPB_SHIFL</name>
<feature type="chain" id="PRO_0000212049" description="Universal stress protein B">
    <location>
        <begin position="1"/>
        <end position="111"/>
    </location>
</feature>
<feature type="transmembrane region" description="Helical" evidence="2">
    <location>
        <begin position="1"/>
        <end position="21"/>
    </location>
</feature>
<feature type="topological domain" description="Cytoplasmic" evidence="2">
    <location>
        <begin position="22"/>
        <end position="89"/>
    </location>
</feature>
<feature type="transmembrane region" description="Helical" evidence="2">
    <location>
        <begin position="90"/>
        <end position="110"/>
    </location>
</feature>
<feature type="topological domain" description="Periplasmic" evidence="2">
    <location>
        <position position="111"/>
    </location>
</feature>
<reference key="1">
    <citation type="journal article" date="2002" name="Nucleic Acids Res.">
        <title>Genome sequence of Shigella flexneri 2a: insights into pathogenicity through comparison with genomes of Escherichia coli K12 and O157.</title>
        <authorList>
            <person name="Jin Q."/>
            <person name="Yuan Z."/>
            <person name="Xu J."/>
            <person name="Wang Y."/>
            <person name="Shen Y."/>
            <person name="Lu W."/>
            <person name="Wang J."/>
            <person name="Liu H."/>
            <person name="Yang J."/>
            <person name="Yang F."/>
            <person name="Zhang X."/>
            <person name="Zhang J."/>
            <person name="Yang G."/>
            <person name="Wu H."/>
            <person name="Qu D."/>
            <person name="Dong J."/>
            <person name="Sun L."/>
            <person name="Xue Y."/>
            <person name="Zhao A."/>
            <person name="Gao Y."/>
            <person name="Zhu J."/>
            <person name="Kan B."/>
            <person name="Ding K."/>
            <person name="Chen S."/>
            <person name="Cheng H."/>
            <person name="Yao Z."/>
            <person name="He B."/>
            <person name="Chen R."/>
            <person name="Ma D."/>
            <person name="Qiang B."/>
            <person name="Wen Y."/>
            <person name="Hou Y."/>
            <person name="Yu J."/>
        </authorList>
    </citation>
    <scope>NUCLEOTIDE SEQUENCE [LARGE SCALE GENOMIC DNA]</scope>
    <source>
        <strain>301 / Serotype 2a</strain>
    </source>
</reference>
<reference key="2">
    <citation type="journal article" date="2003" name="Infect. Immun.">
        <title>Complete genome sequence and comparative genomics of Shigella flexneri serotype 2a strain 2457T.</title>
        <authorList>
            <person name="Wei J."/>
            <person name="Goldberg M.B."/>
            <person name="Burland V."/>
            <person name="Venkatesan M.M."/>
            <person name="Deng W."/>
            <person name="Fournier G."/>
            <person name="Mayhew G.F."/>
            <person name="Plunkett G. III"/>
            <person name="Rose D.J."/>
            <person name="Darling A."/>
            <person name="Mau B."/>
            <person name="Perna N.T."/>
            <person name="Payne S.M."/>
            <person name="Runyen-Janecky L.J."/>
            <person name="Zhou S."/>
            <person name="Schwartz D.C."/>
            <person name="Blattner F.R."/>
        </authorList>
    </citation>
    <scope>NUCLEOTIDE SEQUENCE [LARGE SCALE GENOMIC DNA]</scope>
    <source>
        <strain>ATCC 700930 / 2457T / Serotype 2a</strain>
    </source>
</reference>
<dbReference type="EMBL" id="AE005674">
    <property type="protein sequence ID" value="AAN44982.1"/>
    <property type="molecule type" value="Genomic_DNA"/>
</dbReference>
<dbReference type="EMBL" id="AE014073">
    <property type="protein sequence ID" value="AAP19204.1"/>
    <property type="molecule type" value="Genomic_DNA"/>
</dbReference>
<dbReference type="RefSeq" id="WP_000626187.1">
    <property type="nucleotide sequence ID" value="NZ_WPGW01000101.1"/>
</dbReference>
<dbReference type="SMR" id="P0A8S8"/>
<dbReference type="STRING" id="198214.SF3525"/>
<dbReference type="PaxDb" id="198214-SF3525"/>
<dbReference type="GeneID" id="93778499"/>
<dbReference type="KEGG" id="sfl:SF3525"/>
<dbReference type="KEGG" id="sfx:S4243"/>
<dbReference type="PATRIC" id="fig|198214.7.peg.4149"/>
<dbReference type="HOGENOM" id="CLU_151816_0_0_6"/>
<dbReference type="Proteomes" id="UP000001006">
    <property type="component" value="Chromosome"/>
</dbReference>
<dbReference type="Proteomes" id="UP000002673">
    <property type="component" value="Chromosome"/>
</dbReference>
<dbReference type="GO" id="GO:0005886">
    <property type="term" value="C:plasma membrane"/>
    <property type="evidence" value="ECO:0007669"/>
    <property type="project" value="UniProtKB-SubCell"/>
</dbReference>
<dbReference type="HAMAP" id="MF_01088">
    <property type="entry name" value="UspB"/>
    <property type="match status" value="1"/>
</dbReference>
<dbReference type="InterPro" id="IPR019598">
    <property type="entry name" value="Universal_stress_protein_B"/>
</dbReference>
<dbReference type="NCBIfam" id="NF003435">
    <property type="entry name" value="PRK04960.1"/>
    <property type="match status" value="1"/>
</dbReference>
<dbReference type="Pfam" id="PF10625">
    <property type="entry name" value="UspB"/>
    <property type="match status" value="1"/>
</dbReference>
<protein>
    <recommendedName>
        <fullName>Universal stress protein B</fullName>
    </recommendedName>
</protein>
<evidence type="ECO:0000250" key="1"/>
<evidence type="ECO:0000255" key="2"/>
<evidence type="ECO:0000305" key="3"/>
<organism>
    <name type="scientific">Shigella flexneri</name>
    <dbReference type="NCBI Taxonomy" id="623"/>
    <lineage>
        <taxon>Bacteria</taxon>
        <taxon>Pseudomonadati</taxon>
        <taxon>Pseudomonadota</taxon>
        <taxon>Gammaproteobacteria</taxon>
        <taxon>Enterobacterales</taxon>
        <taxon>Enterobacteriaceae</taxon>
        <taxon>Shigella</taxon>
    </lineage>
</organism>
<comment type="subcellular location">
    <subcellularLocation>
        <location evidence="1">Cell inner membrane</location>
        <topology evidence="1">Multi-pass membrane protein</topology>
    </subcellularLocation>
</comment>
<comment type="similarity">
    <text evidence="3">Belongs to the universal stress protein B family.</text>
</comment>
<keyword id="KW-0997">Cell inner membrane</keyword>
<keyword id="KW-1003">Cell membrane</keyword>
<keyword id="KW-0472">Membrane</keyword>
<keyword id="KW-1185">Reference proteome</keyword>
<keyword id="KW-0812">Transmembrane</keyword>
<keyword id="KW-1133">Transmembrane helix</keyword>
<proteinExistence type="inferred from homology"/>
<gene>
    <name type="primary">uspB</name>
    <name type="ordered locus">SF3525</name>
    <name type="ordered locus">S4243</name>
</gene>